<dbReference type="EC" id="6.1.1.17" evidence="1"/>
<dbReference type="EMBL" id="AM180088">
    <property type="protein sequence ID" value="CAJ52995.1"/>
    <property type="molecule type" value="Genomic_DNA"/>
</dbReference>
<dbReference type="SMR" id="Q18GA5"/>
<dbReference type="STRING" id="362976.HQ_2888A"/>
<dbReference type="KEGG" id="hwa:HQ_2888A"/>
<dbReference type="eggNOG" id="arCOG04302">
    <property type="taxonomic scope" value="Archaea"/>
</dbReference>
<dbReference type="HOGENOM" id="CLU_001882_1_3_2"/>
<dbReference type="Proteomes" id="UP000001975">
    <property type="component" value="Chromosome"/>
</dbReference>
<dbReference type="GO" id="GO:0005829">
    <property type="term" value="C:cytosol"/>
    <property type="evidence" value="ECO:0007669"/>
    <property type="project" value="TreeGrafter"/>
</dbReference>
<dbReference type="GO" id="GO:0005524">
    <property type="term" value="F:ATP binding"/>
    <property type="evidence" value="ECO:0007669"/>
    <property type="project" value="UniProtKB-UniRule"/>
</dbReference>
<dbReference type="GO" id="GO:0004818">
    <property type="term" value="F:glutamate-tRNA ligase activity"/>
    <property type="evidence" value="ECO:0007669"/>
    <property type="project" value="UniProtKB-UniRule"/>
</dbReference>
<dbReference type="GO" id="GO:0043604">
    <property type="term" value="P:amide biosynthetic process"/>
    <property type="evidence" value="ECO:0007669"/>
    <property type="project" value="TreeGrafter"/>
</dbReference>
<dbReference type="GO" id="GO:0006424">
    <property type="term" value="P:glutamyl-tRNA aminoacylation"/>
    <property type="evidence" value="ECO:0007669"/>
    <property type="project" value="UniProtKB-UniRule"/>
</dbReference>
<dbReference type="Gene3D" id="2.40.240.100">
    <property type="match status" value="1"/>
</dbReference>
<dbReference type="Gene3D" id="3.40.50.620">
    <property type="entry name" value="HUPs"/>
    <property type="match status" value="1"/>
</dbReference>
<dbReference type="Gene3D" id="2.40.240.10">
    <property type="entry name" value="Ribosomal Protein L25, Chain P"/>
    <property type="match status" value="1"/>
</dbReference>
<dbReference type="HAMAP" id="MF_02076">
    <property type="entry name" value="Glu_tRNA_synth_type2"/>
    <property type="match status" value="1"/>
</dbReference>
<dbReference type="InterPro" id="IPR050132">
    <property type="entry name" value="Gln/Glu-tRNA_Ligase"/>
</dbReference>
<dbReference type="InterPro" id="IPR004526">
    <property type="entry name" value="Glu-tRNA-synth_arc/euk"/>
</dbReference>
<dbReference type="InterPro" id="IPR000924">
    <property type="entry name" value="Glu/Gln-tRNA-synth"/>
</dbReference>
<dbReference type="InterPro" id="IPR020058">
    <property type="entry name" value="Glu/Gln-tRNA-synth_Ib_cat-dom"/>
</dbReference>
<dbReference type="InterPro" id="IPR020059">
    <property type="entry name" value="Glu/Gln-tRNA-synth_Ib_codon-bd"/>
</dbReference>
<dbReference type="InterPro" id="IPR020056">
    <property type="entry name" value="Rbsml_bL25/Gln-tRNA_synth_N"/>
</dbReference>
<dbReference type="InterPro" id="IPR011035">
    <property type="entry name" value="Ribosomal_bL25/Gln-tRNA_synth"/>
</dbReference>
<dbReference type="InterPro" id="IPR014729">
    <property type="entry name" value="Rossmann-like_a/b/a_fold"/>
</dbReference>
<dbReference type="InterPro" id="IPR049437">
    <property type="entry name" value="tRNA-synt_1c_C2"/>
</dbReference>
<dbReference type="NCBIfam" id="TIGR00463">
    <property type="entry name" value="gltX_arch"/>
    <property type="match status" value="1"/>
</dbReference>
<dbReference type="NCBIfam" id="NF003169">
    <property type="entry name" value="PRK04156.1"/>
    <property type="match status" value="1"/>
</dbReference>
<dbReference type="PANTHER" id="PTHR43097:SF5">
    <property type="entry name" value="GLUTAMATE--TRNA LIGASE"/>
    <property type="match status" value="1"/>
</dbReference>
<dbReference type="PANTHER" id="PTHR43097">
    <property type="entry name" value="GLUTAMINE-TRNA LIGASE"/>
    <property type="match status" value="1"/>
</dbReference>
<dbReference type="Pfam" id="PF00749">
    <property type="entry name" value="tRNA-synt_1c"/>
    <property type="match status" value="1"/>
</dbReference>
<dbReference type="Pfam" id="PF03950">
    <property type="entry name" value="tRNA-synt_1c_C"/>
    <property type="match status" value="1"/>
</dbReference>
<dbReference type="Pfam" id="PF20974">
    <property type="entry name" value="tRNA-synt_1c_C2"/>
    <property type="match status" value="1"/>
</dbReference>
<dbReference type="PRINTS" id="PR00987">
    <property type="entry name" value="TRNASYNTHGLU"/>
</dbReference>
<dbReference type="SUPFAM" id="SSF52374">
    <property type="entry name" value="Nucleotidylyl transferase"/>
    <property type="match status" value="1"/>
</dbReference>
<dbReference type="SUPFAM" id="SSF50715">
    <property type="entry name" value="Ribosomal protein L25-like"/>
    <property type="match status" value="1"/>
</dbReference>
<comment type="function">
    <text evidence="1">Catalyzes the attachment of glutamate to tRNA(Glu) in a two-step reaction: glutamate is first activated by ATP to form Glu-AMP and then transferred to the acceptor end of tRNA(Glu).</text>
</comment>
<comment type="catalytic activity">
    <reaction evidence="1">
        <text>tRNA(Glu) + L-glutamate + ATP = L-glutamyl-tRNA(Glu) + AMP + diphosphate</text>
        <dbReference type="Rhea" id="RHEA:23540"/>
        <dbReference type="Rhea" id="RHEA-COMP:9663"/>
        <dbReference type="Rhea" id="RHEA-COMP:9680"/>
        <dbReference type="ChEBI" id="CHEBI:29985"/>
        <dbReference type="ChEBI" id="CHEBI:30616"/>
        <dbReference type="ChEBI" id="CHEBI:33019"/>
        <dbReference type="ChEBI" id="CHEBI:78442"/>
        <dbReference type="ChEBI" id="CHEBI:78520"/>
        <dbReference type="ChEBI" id="CHEBI:456215"/>
        <dbReference type="EC" id="6.1.1.17"/>
    </reaction>
</comment>
<comment type="subcellular location">
    <subcellularLocation>
        <location evidence="1">Cytoplasm</location>
    </subcellularLocation>
</comment>
<comment type="similarity">
    <text evidence="1">Belongs to the class-I aminoacyl-tRNA synthetase family. Glutamate--tRNA ligase type 2 subfamily.</text>
</comment>
<feature type="chain" id="PRO_0000367800" description="Glutamate--tRNA ligase">
    <location>
        <begin position="1"/>
        <end position="586"/>
    </location>
</feature>
<feature type="region of interest" description="Disordered" evidence="2">
    <location>
        <begin position="84"/>
        <end position="111"/>
    </location>
</feature>
<feature type="short sequence motif" description="'HIGH' region" evidence="1">
    <location>
        <begin position="119"/>
        <end position="129"/>
    </location>
</feature>
<feature type="compositionally biased region" description="Acidic residues" evidence="2">
    <location>
        <begin position="85"/>
        <end position="94"/>
    </location>
</feature>
<sequence length="586" mass="65819">MTIDDELRDRIKRSAKKHALLNAVKHKSDAEVGAIMGPLMGENPEFRPHGDAIPGIVSGVVSQINDLSVDERRSRLETIAPEALTDIESEDTTDTYDLPSLPGVSDDEPTQSVRMRAAPNPNGPWHIGHARMPAVIGTYSNRYDGSFIIRFDDTDPETKRPDLDAYDDILEDVAYLGFEPDDVIRASDRLELYYARARELIDAGGAYTCSCSGEHFSKLKNAGEACPHREKSVNQTQTEFEAMIHGEYSAGEMVLRVRTDIEHKNPALRDWVAFRLIDTPHPRPQAADYRCWPMLDFQSGIDDHETGVTHIIRGIDLQDSAKRQRFVYDYFDWEYPEVVHWGHINVDEYDVSLSTSTLIEKIETGELDGWDDPRAPTLQSLRRRGIKGDAIVEAMINLGTSTTNVELSMSSIYSNNRQHIDAKADRYFFVRNGETFTLETASEDTIAGHPPLHPDNPERGERVVPVTDGITIEPADVPADGDRVWLKGYACVRRDDNHFRTTNDGIEVVREGDVDVIHWAPAPESSASISVRMRTPDGDITGIAEPDLTDAEIDDIVQFERVGFARIDTKDEQSLDTDMTVYWTHP</sequence>
<name>SYE_HALWD</name>
<protein>
    <recommendedName>
        <fullName evidence="1">Glutamate--tRNA ligase</fullName>
        <ecNumber evidence="1">6.1.1.17</ecNumber>
    </recommendedName>
    <alternativeName>
        <fullName evidence="1">Glutamyl-tRNA synthetase</fullName>
        <shortName evidence="1">GluRS</shortName>
    </alternativeName>
</protein>
<gene>
    <name evidence="1" type="primary">gltX</name>
    <name type="ordered locus">HQ_2888A</name>
</gene>
<reference key="1">
    <citation type="journal article" date="2006" name="BMC Genomics">
        <title>The genome of the square archaeon Haloquadratum walsbyi: life at the limits of water activity.</title>
        <authorList>
            <person name="Bolhuis H."/>
            <person name="Palm P."/>
            <person name="Wende A."/>
            <person name="Falb M."/>
            <person name="Rampp M."/>
            <person name="Rodriguez-Valera F."/>
            <person name="Pfeiffer F."/>
            <person name="Oesterhelt D."/>
        </authorList>
    </citation>
    <scope>NUCLEOTIDE SEQUENCE [LARGE SCALE GENOMIC DNA]</scope>
    <source>
        <strain>DSM 16790 / HBSQ001</strain>
    </source>
</reference>
<proteinExistence type="inferred from homology"/>
<evidence type="ECO:0000255" key="1">
    <source>
        <dbReference type="HAMAP-Rule" id="MF_02076"/>
    </source>
</evidence>
<evidence type="ECO:0000256" key="2">
    <source>
        <dbReference type="SAM" id="MobiDB-lite"/>
    </source>
</evidence>
<organism>
    <name type="scientific">Haloquadratum walsbyi (strain DSM 16790 / HBSQ001)</name>
    <dbReference type="NCBI Taxonomy" id="362976"/>
    <lineage>
        <taxon>Archaea</taxon>
        <taxon>Methanobacteriati</taxon>
        <taxon>Methanobacteriota</taxon>
        <taxon>Stenosarchaea group</taxon>
        <taxon>Halobacteria</taxon>
        <taxon>Halobacteriales</taxon>
        <taxon>Haloferacaceae</taxon>
        <taxon>Haloquadratum</taxon>
    </lineage>
</organism>
<accession>Q18GA5</accession>
<keyword id="KW-0030">Aminoacyl-tRNA synthetase</keyword>
<keyword id="KW-0067">ATP-binding</keyword>
<keyword id="KW-0963">Cytoplasm</keyword>
<keyword id="KW-0436">Ligase</keyword>
<keyword id="KW-0547">Nucleotide-binding</keyword>
<keyword id="KW-0648">Protein biosynthesis</keyword>
<keyword id="KW-1185">Reference proteome</keyword>